<organism>
    <name type="scientific">Cyprinus carpio</name>
    <name type="common">Common carp</name>
    <dbReference type="NCBI Taxonomy" id="7962"/>
    <lineage>
        <taxon>Eukaryota</taxon>
        <taxon>Metazoa</taxon>
        <taxon>Chordata</taxon>
        <taxon>Craniata</taxon>
        <taxon>Vertebrata</taxon>
        <taxon>Euteleostomi</taxon>
        <taxon>Actinopterygii</taxon>
        <taxon>Neopterygii</taxon>
        <taxon>Teleostei</taxon>
        <taxon>Ostariophysi</taxon>
        <taxon>Cypriniformes</taxon>
        <taxon>Cyprinidae</taxon>
        <taxon>Cyprininae</taxon>
        <taxon>Cyprinus</taxon>
    </lineage>
</organism>
<gene>
    <name type="primary">MT-ND6</name>
    <name type="synonym">MTND6</name>
    <name type="synonym">NADH6</name>
    <name type="synonym">ND6</name>
</gene>
<geneLocation type="mitochondrion"/>
<feature type="chain" id="PRO_0000118273" description="NADH-ubiquinone oxidoreductase chain 6">
    <location>
        <begin position="1"/>
        <end position="172"/>
    </location>
</feature>
<feature type="transmembrane region" description="Helical" evidence="2">
    <location>
        <begin position="1"/>
        <end position="21"/>
    </location>
</feature>
<feature type="transmembrane region" description="Helical" evidence="2">
    <location>
        <begin position="25"/>
        <end position="45"/>
    </location>
</feature>
<feature type="transmembrane region" description="Helical" evidence="2">
    <location>
        <begin position="53"/>
        <end position="73"/>
    </location>
</feature>
<feature type="transmembrane region" description="Helical" evidence="2">
    <location>
        <begin position="86"/>
        <end position="106"/>
    </location>
</feature>
<feature type="transmembrane region" description="Helical" evidence="2">
    <location>
        <begin position="140"/>
        <end position="160"/>
    </location>
</feature>
<dbReference type="EC" id="7.1.1.2"/>
<dbReference type="EMBL" id="X61010">
    <property type="protein sequence ID" value="CAA43338.1"/>
    <property type="molecule type" value="Genomic_DNA"/>
</dbReference>
<dbReference type="PIR" id="S36007">
    <property type="entry name" value="S36007"/>
</dbReference>
<dbReference type="RefSeq" id="NP_007093.1">
    <property type="nucleotide sequence ID" value="NC_001606.1"/>
</dbReference>
<dbReference type="SMR" id="P24982"/>
<dbReference type="GeneID" id="807762"/>
<dbReference type="KEGG" id="ccar:807762"/>
<dbReference type="CTD" id="4541"/>
<dbReference type="OMA" id="WVIYDTG"/>
<dbReference type="OrthoDB" id="9837654at2759"/>
<dbReference type="Proteomes" id="UP000694384">
    <property type="component" value="Unplaced"/>
</dbReference>
<dbReference type="Proteomes" id="UP000694427">
    <property type="component" value="Unplaced"/>
</dbReference>
<dbReference type="Proteomes" id="UP000694700">
    <property type="component" value="Unplaced"/>
</dbReference>
<dbReference type="Proteomes" id="UP000694701">
    <property type="component" value="Unplaced"/>
</dbReference>
<dbReference type="Proteomes" id="UP001155660">
    <property type="component" value="Mitochondrion MT"/>
</dbReference>
<dbReference type="GO" id="GO:0031966">
    <property type="term" value="C:mitochondrial membrane"/>
    <property type="evidence" value="ECO:0007669"/>
    <property type="project" value="UniProtKB-SubCell"/>
</dbReference>
<dbReference type="GO" id="GO:0008137">
    <property type="term" value="F:NADH dehydrogenase (ubiquinone) activity"/>
    <property type="evidence" value="ECO:0007669"/>
    <property type="project" value="UniProtKB-EC"/>
</dbReference>
<dbReference type="InterPro" id="IPR050269">
    <property type="entry name" value="ComplexI_Subunit6"/>
</dbReference>
<dbReference type="InterPro" id="IPR001457">
    <property type="entry name" value="NADH_UbQ/plastoQ_OxRdtase_su6"/>
</dbReference>
<dbReference type="PANTHER" id="PTHR11435">
    <property type="entry name" value="NADH UBIQUINONE OXIDOREDUCTASE SUBUNIT ND6"/>
    <property type="match status" value="1"/>
</dbReference>
<dbReference type="PANTHER" id="PTHR11435:SF1">
    <property type="entry name" value="NADH-UBIQUINONE OXIDOREDUCTASE CHAIN 6"/>
    <property type="match status" value="1"/>
</dbReference>
<dbReference type="Pfam" id="PF00499">
    <property type="entry name" value="Oxidored_q3"/>
    <property type="match status" value="1"/>
</dbReference>
<evidence type="ECO:0000250" key="1"/>
<evidence type="ECO:0000255" key="2"/>
<evidence type="ECO:0000305" key="3"/>
<keyword id="KW-0249">Electron transport</keyword>
<keyword id="KW-0472">Membrane</keyword>
<keyword id="KW-0496">Mitochondrion</keyword>
<keyword id="KW-0520">NAD</keyword>
<keyword id="KW-1185">Reference proteome</keyword>
<keyword id="KW-0679">Respiratory chain</keyword>
<keyword id="KW-1278">Translocase</keyword>
<keyword id="KW-0812">Transmembrane</keyword>
<keyword id="KW-1133">Transmembrane helix</keyword>
<keyword id="KW-0813">Transport</keyword>
<keyword id="KW-0830">Ubiquinone</keyword>
<name>NU6M_CYPCA</name>
<reference key="1">
    <citation type="journal article" date="1994" name="J. Mol. Evol.">
        <title>The complete nucleotide sequence and gene organization of carp (Cyprinus carpio) mitochondrial genome.</title>
        <authorList>
            <person name="Chang Y.S."/>
            <person name="Huang F.L."/>
            <person name="Lo T.B."/>
        </authorList>
    </citation>
    <scope>NUCLEOTIDE SEQUENCE [GENOMIC DNA]</scope>
</reference>
<comment type="function">
    <text evidence="1">Core subunit of the mitochondrial membrane respiratory chain NADH dehydrogenase (Complex I) that is believed to belong to the minimal assembly required for catalysis. Complex I functions in the transfer of electrons from NADH to the respiratory chain. The immediate electron acceptor for the enzyme is believed to be ubiquinone (By similarity).</text>
</comment>
<comment type="catalytic activity">
    <reaction>
        <text>a ubiquinone + NADH + 5 H(+)(in) = a ubiquinol + NAD(+) + 4 H(+)(out)</text>
        <dbReference type="Rhea" id="RHEA:29091"/>
        <dbReference type="Rhea" id="RHEA-COMP:9565"/>
        <dbReference type="Rhea" id="RHEA-COMP:9566"/>
        <dbReference type="ChEBI" id="CHEBI:15378"/>
        <dbReference type="ChEBI" id="CHEBI:16389"/>
        <dbReference type="ChEBI" id="CHEBI:17976"/>
        <dbReference type="ChEBI" id="CHEBI:57540"/>
        <dbReference type="ChEBI" id="CHEBI:57945"/>
        <dbReference type="EC" id="7.1.1.2"/>
    </reaction>
</comment>
<comment type="subcellular location">
    <subcellularLocation>
        <location evidence="3">Mitochondrion membrane</location>
        <topology evidence="3">Multi-pass membrane protein</topology>
    </subcellularLocation>
</comment>
<comment type="similarity">
    <text evidence="3">Belongs to the complex I subunit 6 family.</text>
</comment>
<protein>
    <recommendedName>
        <fullName>NADH-ubiquinone oxidoreductase chain 6</fullName>
        <ecNumber>7.1.1.2</ecNumber>
    </recommendedName>
    <alternativeName>
        <fullName>NADH dehydrogenase subunit 6</fullName>
    </alternativeName>
</protein>
<proteinExistence type="inferred from homology"/>
<accession>P24982</accession>
<sequence length="172" mass="17972">MTYFMFLLLMALVVGLVAVASNPTPYFAALGLVVAAGVGCGVLVGHGGSFLSLVLFLIYLGGMLVVFAYAALAAEPFPEAWGSRSVLGYVLVYLLGVGLVAGIFWGGWYEGSWVVVDGLKEFSVLRGDISGVAVMYSSGGGMLVICAWVLLLTLLVVLELTRGLSRGALRAV</sequence>